<keyword id="KW-1003">Cell membrane</keyword>
<keyword id="KW-0449">Lipoprotein</keyword>
<keyword id="KW-0472">Membrane</keyword>
<keyword id="KW-0564">Palmitate</keyword>
<keyword id="KW-1185">Reference proteome</keyword>
<keyword id="KW-0732">Signal</keyword>
<proteinExistence type="evidence at transcript level"/>
<organism>
    <name type="scientific">Salmonella typhimurium (strain LT2 / SGSC1412 / ATCC 700720)</name>
    <dbReference type="NCBI Taxonomy" id="99287"/>
    <lineage>
        <taxon>Bacteria</taxon>
        <taxon>Pseudomonadati</taxon>
        <taxon>Pseudomonadota</taxon>
        <taxon>Gammaproteobacteria</taxon>
        <taxon>Enterobacterales</taxon>
        <taxon>Enterobacteriaceae</taxon>
        <taxon>Salmonella</taxon>
    </lineage>
</organism>
<accession>P37723</accession>
<reference key="1">
    <citation type="journal article" date="2001" name="Nature">
        <title>Complete genome sequence of Salmonella enterica serovar Typhimurium LT2.</title>
        <authorList>
            <person name="McClelland M."/>
            <person name="Sanderson K.E."/>
            <person name="Spieth J."/>
            <person name="Clifton S.W."/>
            <person name="Latreille P."/>
            <person name="Courtney L."/>
            <person name="Porwollik S."/>
            <person name="Ali J."/>
            <person name="Dante M."/>
            <person name="Du F."/>
            <person name="Hou S."/>
            <person name="Layman D."/>
            <person name="Leonard S."/>
            <person name="Nguyen C."/>
            <person name="Scott K."/>
            <person name="Holmes A."/>
            <person name="Grewal N."/>
            <person name="Mulvaney E."/>
            <person name="Ryan E."/>
            <person name="Sun H."/>
            <person name="Florea L."/>
            <person name="Miller W."/>
            <person name="Stoneking T."/>
            <person name="Nhan M."/>
            <person name="Waterston R."/>
            <person name="Wilson R.K."/>
        </authorList>
    </citation>
    <scope>NUCLEOTIDE SEQUENCE [LARGE SCALE GENOMIC DNA]</scope>
    <source>
        <strain>LT2 / SGSC1412 / ATCC 700720</strain>
    </source>
</reference>
<reference key="2">
    <citation type="journal article" date="1987" name="Eur. J. Biochem.">
        <title>Cloning and characterization of the pyrF operon of Salmonella typhimurium.</title>
        <authorList>
            <person name="Theisen M."/>
            <person name="Kelln R.A."/>
            <person name="Neuhard J."/>
        </authorList>
    </citation>
    <scope>NUCLEOTIDE SEQUENCE [GENOMIC DNA] OF 53-72</scope>
    <source>
        <strain>LT2</strain>
    </source>
</reference>
<reference key="3">
    <citation type="journal article" date="1994" name="Nat. Genet.">
        <title>Large scale bacterial gene discovery by similarity search.</title>
        <authorList>
            <person name="Robison K."/>
            <person name="Gilbert W."/>
            <person name="Church G.M."/>
        </authorList>
    </citation>
    <scope>IDENTIFICATION</scope>
</reference>
<sequence length="72" mass="6936">MFMTSKKMAAAVLAITVAMSLSACSNWSKRDRNTAIGAGAGALGGAVLTDGSTLGTLGGAAVGGVIGHQVGK</sequence>
<dbReference type="EMBL" id="AE006468">
    <property type="protein sequence ID" value="AAL20623.1"/>
    <property type="molecule type" value="Genomic_DNA"/>
</dbReference>
<dbReference type="EMBL" id="X05382">
    <property type="status" value="NOT_ANNOTATED_CDS"/>
    <property type="molecule type" value="Genomic_DNA"/>
</dbReference>
<dbReference type="RefSeq" id="NP_460664.1">
    <property type="nucleotide sequence ID" value="NC_003197.2"/>
</dbReference>
<dbReference type="RefSeq" id="WP_000481166.1">
    <property type="nucleotide sequence ID" value="NC_003197.2"/>
</dbReference>
<dbReference type="STRING" id="99287.STM1705"/>
<dbReference type="PaxDb" id="99287-STM1705"/>
<dbReference type="GeneID" id="1253224"/>
<dbReference type="KEGG" id="stm:STM1705"/>
<dbReference type="PATRIC" id="fig|99287.12.peg.1800"/>
<dbReference type="HOGENOM" id="CLU_158447_1_2_6"/>
<dbReference type="OMA" id="AGCADMT"/>
<dbReference type="BioCyc" id="SENT99287:STM1705-MONOMER"/>
<dbReference type="Proteomes" id="UP000001014">
    <property type="component" value="Chromosome"/>
</dbReference>
<dbReference type="GO" id="GO:0019867">
    <property type="term" value="C:outer membrane"/>
    <property type="evidence" value="ECO:0007669"/>
    <property type="project" value="InterPro"/>
</dbReference>
<dbReference type="GO" id="GO:0005886">
    <property type="term" value="C:plasma membrane"/>
    <property type="evidence" value="ECO:0007669"/>
    <property type="project" value="UniProtKB-SubCell"/>
</dbReference>
<dbReference type="InterPro" id="IPR008816">
    <property type="entry name" value="Gly_zipper_2TM_dom"/>
</dbReference>
<dbReference type="NCBIfam" id="NF007830">
    <property type="entry name" value="PRK10540.1"/>
    <property type="match status" value="1"/>
</dbReference>
<dbReference type="Pfam" id="PF05433">
    <property type="entry name" value="Rick_17kDa_Anti"/>
    <property type="match status" value="1"/>
</dbReference>
<dbReference type="PROSITE" id="PS51257">
    <property type="entry name" value="PROKAR_LIPOPROTEIN"/>
    <property type="match status" value="1"/>
</dbReference>
<evidence type="ECO:0000250" key="1"/>
<evidence type="ECO:0000255" key="2">
    <source>
        <dbReference type="PROSITE-ProRule" id="PRU00303"/>
    </source>
</evidence>
<evidence type="ECO:0000305" key="3"/>
<protein>
    <recommendedName>
        <fullName>Osmotically-inducible lipoprotein B</fullName>
    </recommendedName>
</protein>
<feature type="signal peptide" evidence="2">
    <location>
        <begin position="1"/>
        <end position="23"/>
    </location>
</feature>
<feature type="chain" id="PRO_0000018070" description="Osmotically-inducible lipoprotein B">
    <location>
        <begin position="24"/>
        <end position="72"/>
    </location>
</feature>
<feature type="lipid moiety-binding region" description="N-palmitoyl cysteine" evidence="3">
    <location>
        <position position="24"/>
    </location>
</feature>
<feature type="lipid moiety-binding region" description="S-diacylglycerol cysteine" evidence="3">
    <location>
        <position position="24"/>
    </location>
</feature>
<comment type="function">
    <text evidence="1">Provides resistance to osmotic stress. May be important for stationary-phase survival (By similarity).</text>
</comment>
<comment type="subcellular location">
    <subcellularLocation>
        <location evidence="2">Cell membrane</location>
        <topology evidence="2">Lipid-anchor</topology>
    </subcellularLocation>
</comment>
<comment type="induction">
    <text>By elevated osmotic pressure in the growth medium.</text>
</comment>
<gene>
    <name type="primary">osmB</name>
    <name type="ordered locus">STM1705</name>
</gene>
<name>OSMB_SALTY</name>